<feature type="chain" id="PRO_0000163412" description="Large ribosomal subunit protein bL19">
    <location>
        <begin position="1"/>
        <end position="116"/>
    </location>
</feature>
<name>RL19_GEOSE</name>
<comment type="function">
    <text evidence="1">This protein is located at the 30S-50S ribosomal subunit interface and may play a role in the structure and function of the aminoacyl-tRNA binding site.</text>
</comment>
<comment type="similarity">
    <text evidence="2">Belongs to the bacterial ribosomal protein bL19 family.</text>
</comment>
<protein>
    <recommendedName>
        <fullName evidence="2">Large ribosomal subunit protein bL19</fullName>
    </recommendedName>
    <alternativeName>
        <fullName>50S ribosomal protein L19</fullName>
    </alternativeName>
</protein>
<reference key="1">
    <citation type="journal article" date="1993" name="J. Biol. Chem.">
        <title>Cross-linked amino acids in the protein pairs L3-L19 and L23-L29 of Bacillus stearothermophilus ribosomes after treatment with diepoxybutane.</title>
        <authorList>
            <person name="Herwig S."/>
            <person name="Kruft V."/>
            <person name="Eckart K."/>
            <person name="Wittmann-Liebold B."/>
        </authorList>
    </citation>
    <scope>NUCLEOTIDE SEQUENCE [GENOMIC DNA]</scope>
</reference>
<gene>
    <name type="primary">rplS</name>
</gene>
<accession>P30529</accession>
<proteinExistence type="inferred from homology"/>
<sequence length="116" mass="13444">MHHLIQEITKEQLRTDLPDFRPGDTVRVHVKVVEGNRERIQVFEGVVIKRRGAGISETFTVRKVSYGVGVERTFPVHTPKIAKLEVIRRGKVRRAKLYYLRELRGKAARIKEKTAQ</sequence>
<dbReference type="PIR" id="A45434">
    <property type="entry name" value="A45434"/>
</dbReference>
<dbReference type="RefSeq" id="WP_014195437.1">
    <property type="nucleotide sequence ID" value="NZ_RCTK01000001.1"/>
</dbReference>
<dbReference type="SMR" id="P30529"/>
<dbReference type="GeneID" id="89611592"/>
<dbReference type="OrthoDB" id="9803541at2"/>
<dbReference type="GO" id="GO:0022625">
    <property type="term" value="C:cytosolic large ribosomal subunit"/>
    <property type="evidence" value="ECO:0007669"/>
    <property type="project" value="TreeGrafter"/>
</dbReference>
<dbReference type="GO" id="GO:0003735">
    <property type="term" value="F:structural constituent of ribosome"/>
    <property type="evidence" value="ECO:0007669"/>
    <property type="project" value="InterPro"/>
</dbReference>
<dbReference type="GO" id="GO:0006412">
    <property type="term" value="P:translation"/>
    <property type="evidence" value="ECO:0007669"/>
    <property type="project" value="UniProtKB-UniRule"/>
</dbReference>
<dbReference type="FunFam" id="2.30.30.790:FF:000001">
    <property type="entry name" value="50S ribosomal protein L19"/>
    <property type="match status" value="1"/>
</dbReference>
<dbReference type="Gene3D" id="2.30.30.790">
    <property type="match status" value="1"/>
</dbReference>
<dbReference type="HAMAP" id="MF_00402">
    <property type="entry name" value="Ribosomal_bL19"/>
    <property type="match status" value="1"/>
</dbReference>
<dbReference type="InterPro" id="IPR001857">
    <property type="entry name" value="Ribosomal_bL19"/>
</dbReference>
<dbReference type="InterPro" id="IPR018257">
    <property type="entry name" value="Ribosomal_bL19_CS"/>
</dbReference>
<dbReference type="InterPro" id="IPR038657">
    <property type="entry name" value="Ribosomal_bL19_sf"/>
</dbReference>
<dbReference type="InterPro" id="IPR008991">
    <property type="entry name" value="Translation_prot_SH3-like_sf"/>
</dbReference>
<dbReference type="NCBIfam" id="TIGR01024">
    <property type="entry name" value="rplS_bact"/>
    <property type="match status" value="1"/>
</dbReference>
<dbReference type="PANTHER" id="PTHR15680:SF9">
    <property type="entry name" value="LARGE RIBOSOMAL SUBUNIT PROTEIN BL19M"/>
    <property type="match status" value="1"/>
</dbReference>
<dbReference type="PANTHER" id="PTHR15680">
    <property type="entry name" value="RIBOSOMAL PROTEIN L19"/>
    <property type="match status" value="1"/>
</dbReference>
<dbReference type="Pfam" id="PF01245">
    <property type="entry name" value="Ribosomal_L19"/>
    <property type="match status" value="1"/>
</dbReference>
<dbReference type="PIRSF" id="PIRSF002191">
    <property type="entry name" value="Ribosomal_L19"/>
    <property type="match status" value="1"/>
</dbReference>
<dbReference type="PRINTS" id="PR00061">
    <property type="entry name" value="RIBOSOMALL19"/>
</dbReference>
<dbReference type="SUPFAM" id="SSF50104">
    <property type="entry name" value="Translation proteins SH3-like domain"/>
    <property type="match status" value="1"/>
</dbReference>
<dbReference type="PROSITE" id="PS01015">
    <property type="entry name" value="RIBOSOMAL_L19"/>
    <property type="match status" value="1"/>
</dbReference>
<evidence type="ECO:0000250" key="1"/>
<evidence type="ECO:0000305" key="2"/>
<organism>
    <name type="scientific">Geobacillus stearothermophilus</name>
    <name type="common">Bacillus stearothermophilus</name>
    <dbReference type="NCBI Taxonomy" id="1422"/>
    <lineage>
        <taxon>Bacteria</taxon>
        <taxon>Bacillati</taxon>
        <taxon>Bacillota</taxon>
        <taxon>Bacilli</taxon>
        <taxon>Bacillales</taxon>
        <taxon>Anoxybacillaceae</taxon>
        <taxon>Geobacillus</taxon>
    </lineage>
</organism>
<keyword id="KW-0687">Ribonucleoprotein</keyword>
<keyword id="KW-0689">Ribosomal protein</keyword>